<organism>
    <name type="scientific">Pongo abelii</name>
    <name type="common">Sumatran orangutan</name>
    <name type="synonym">Pongo pygmaeus abelii</name>
    <dbReference type="NCBI Taxonomy" id="9601"/>
    <lineage>
        <taxon>Eukaryota</taxon>
        <taxon>Metazoa</taxon>
        <taxon>Chordata</taxon>
        <taxon>Craniata</taxon>
        <taxon>Vertebrata</taxon>
        <taxon>Euteleostomi</taxon>
        <taxon>Mammalia</taxon>
        <taxon>Eutheria</taxon>
        <taxon>Euarchontoglires</taxon>
        <taxon>Primates</taxon>
        <taxon>Haplorrhini</taxon>
        <taxon>Catarrhini</taxon>
        <taxon>Hominidae</taxon>
        <taxon>Pongo</taxon>
    </lineage>
</organism>
<sequence length="724" mass="83596">MSAEGYQYRALYDYKKEREEDIDLHLGDILTVNKGSLVALGFSDGQEARPEEIGWLNGYNETTGERGDFPGTYVEYIGRKKISPPTPKPRPPRPLPVAPGSSKTEADVEQQALTLPDLAEQLAPPDIAPPLLIKLVEAIEKKGLECSTLYRTQSSSNLAELRQLLDCDTASVDLEMIDVHVLADAFKRYLLDLPNPVIPAAVYSEMISLAQEVQSSEEYIQLLKKLIRSPSIPHQYWLTLQYLLKHFFKLSQTSSKNLLNARVLSEIFSPMLFRFSAASSDNTENLIKVIEILISTEWNERQPAPALPPKPPKPTTVANNGMNNNMSLQDAEWYWGDISREEVNEKLRDTADGTFLVRDASTKMHGDYTLTLRKGGNNKLIKIFHRDGKYGFSDPLTFNSVVELINHYRNESLAQYNPKLDVKLLYPVSKYQQDQVVKEDNIEAVGKKLHEYNTQFQEKSREYDRLYEEYTRTSQEIQMKRTAIEAFNETIKIFEEQCQTQERYSKEYIEKFKREGNEKEIQRIMHNYDKLKSRISEIIDSRRRLEEDLKKQAAEYREIDKRMNSIKPDLIQLRKTRDQYLMWLTQKGVRQKKLNEWLGNENTEDQYSLVEDDEDLPHHDEKTWNVGSSNRNKAENLLRGKRDGTFLVRESSKQGCYACSVVVDGEVKHCVINKTATGYGFAEPYNLYSSLKELVLHYQHTSLVQHNDSLNVTLAYPVYAQQRR</sequence>
<proteinExistence type="evidence at transcript level"/>
<evidence type="ECO:0000250" key="1"/>
<evidence type="ECO:0000250" key="2">
    <source>
        <dbReference type="UniProtKB" id="P23727"/>
    </source>
</evidence>
<evidence type="ECO:0000250" key="3">
    <source>
        <dbReference type="UniProtKB" id="P26450"/>
    </source>
</evidence>
<evidence type="ECO:0000250" key="4">
    <source>
        <dbReference type="UniProtKB" id="P27986"/>
    </source>
</evidence>
<evidence type="ECO:0000250" key="5">
    <source>
        <dbReference type="UniProtKB" id="Q63787"/>
    </source>
</evidence>
<evidence type="ECO:0000255" key="6">
    <source>
        <dbReference type="PROSITE-ProRule" id="PRU00172"/>
    </source>
</evidence>
<evidence type="ECO:0000255" key="7">
    <source>
        <dbReference type="PROSITE-ProRule" id="PRU00191"/>
    </source>
</evidence>
<evidence type="ECO:0000255" key="8">
    <source>
        <dbReference type="PROSITE-ProRule" id="PRU00192"/>
    </source>
</evidence>
<evidence type="ECO:0000256" key="9">
    <source>
        <dbReference type="SAM" id="MobiDB-lite"/>
    </source>
</evidence>
<evidence type="ECO:0000303" key="10">
    <source ref="1"/>
</evidence>
<evidence type="ECO:0000305" key="11"/>
<keyword id="KW-0007">Acetylation</keyword>
<keyword id="KW-0025">Alternative splicing</keyword>
<keyword id="KW-0343">GTPase activation</keyword>
<keyword id="KW-0597">Phosphoprotein</keyword>
<keyword id="KW-0653">Protein transport</keyword>
<keyword id="KW-1185">Reference proteome</keyword>
<keyword id="KW-0677">Repeat</keyword>
<keyword id="KW-0727">SH2 domain</keyword>
<keyword id="KW-0728">SH3 domain</keyword>
<keyword id="KW-0346">Stress response</keyword>
<keyword id="KW-0813">Transport</keyword>
<keyword id="KW-0832">Ubl conjugation</keyword>
<dbReference type="EMBL" id="CR857802">
    <property type="protein sequence ID" value="CAH90062.1"/>
    <property type="molecule type" value="mRNA"/>
</dbReference>
<dbReference type="EMBL" id="CR860609">
    <property type="protein sequence ID" value="CAH92731.1"/>
    <property type="molecule type" value="mRNA"/>
</dbReference>
<dbReference type="RefSeq" id="NP_001126593.1">
    <property type="nucleotide sequence ID" value="NM_001133121.1"/>
</dbReference>
<dbReference type="RefSeq" id="NP_001128767.2">
    <molecule id="Q5R685-2"/>
    <property type="nucleotide sequence ID" value="NM_001135295.2"/>
</dbReference>
<dbReference type="BMRB" id="Q5R685"/>
<dbReference type="SMR" id="Q5R685"/>
<dbReference type="FunCoup" id="Q5R685">
    <property type="interactions" value="3575"/>
</dbReference>
<dbReference type="STRING" id="9601.ENSPPYP00000017341"/>
<dbReference type="Ensembl" id="ENSPPYT00000036528.1">
    <molecule id="Q5R685-2"/>
    <property type="protein sequence ID" value="ENSPPYP00000031504.1"/>
    <property type="gene ID" value="ENSPPYG00000015520.3"/>
</dbReference>
<dbReference type="GeneID" id="100173589"/>
<dbReference type="KEGG" id="pon:100173589"/>
<dbReference type="CTD" id="5295"/>
<dbReference type="eggNOG" id="KOG4637">
    <property type="taxonomic scope" value="Eukaryota"/>
</dbReference>
<dbReference type="GeneTree" id="ENSGT00940000155553"/>
<dbReference type="InParanoid" id="Q5R685"/>
<dbReference type="OrthoDB" id="3175255at2759"/>
<dbReference type="Proteomes" id="UP000001595">
    <property type="component" value="Chromosome 5"/>
</dbReference>
<dbReference type="GO" id="GO:0005737">
    <property type="term" value="C:cytoplasm"/>
    <property type="evidence" value="ECO:0000250"/>
    <property type="project" value="UniProtKB"/>
</dbReference>
<dbReference type="GO" id="GO:0005829">
    <property type="term" value="C:cytosol"/>
    <property type="evidence" value="ECO:0007669"/>
    <property type="project" value="UniProtKB-ARBA"/>
</dbReference>
<dbReference type="GO" id="GO:0005634">
    <property type="term" value="C:nucleus"/>
    <property type="evidence" value="ECO:0000250"/>
    <property type="project" value="UniProtKB"/>
</dbReference>
<dbReference type="GO" id="GO:0005942">
    <property type="term" value="C:phosphatidylinositol 3-kinase complex"/>
    <property type="evidence" value="ECO:0007669"/>
    <property type="project" value="TreeGrafter"/>
</dbReference>
<dbReference type="GO" id="GO:0046935">
    <property type="term" value="F:1-phosphatidylinositol-3-kinase regulator activity"/>
    <property type="evidence" value="ECO:0007669"/>
    <property type="project" value="TreeGrafter"/>
</dbReference>
<dbReference type="GO" id="GO:0032869">
    <property type="term" value="P:cellular response to insulin stimulus"/>
    <property type="evidence" value="ECO:0000250"/>
    <property type="project" value="UniProtKB"/>
</dbReference>
<dbReference type="GO" id="GO:0008286">
    <property type="term" value="P:insulin receptor signaling pathway"/>
    <property type="evidence" value="ECO:0007669"/>
    <property type="project" value="TreeGrafter"/>
</dbReference>
<dbReference type="GO" id="GO:0001678">
    <property type="term" value="P:intracellular glucose homeostasis"/>
    <property type="evidence" value="ECO:0000250"/>
    <property type="project" value="UniProtKB"/>
</dbReference>
<dbReference type="GO" id="GO:0043066">
    <property type="term" value="P:negative regulation of apoptotic process"/>
    <property type="evidence" value="ECO:0000250"/>
    <property type="project" value="UniProtKB"/>
</dbReference>
<dbReference type="GO" id="GO:0046854">
    <property type="term" value="P:phosphatidylinositol phosphate biosynthetic process"/>
    <property type="evidence" value="ECO:0007669"/>
    <property type="project" value="TreeGrafter"/>
</dbReference>
<dbReference type="GO" id="GO:1900103">
    <property type="term" value="P:positive regulation of endoplasmic reticulum unfolded protein response"/>
    <property type="evidence" value="ECO:0000250"/>
    <property type="project" value="UniProtKB"/>
</dbReference>
<dbReference type="GO" id="GO:0042307">
    <property type="term" value="P:positive regulation of protein import into nucleus"/>
    <property type="evidence" value="ECO:0000250"/>
    <property type="project" value="UniProtKB"/>
</dbReference>
<dbReference type="GO" id="GO:0033120">
    <property type="term" value="P:positive regulation of RNA splicing"/>
    <property type="evidence" value="ECO:0000250"/>
    <property type="project" value="UniProtKB"/>
</dbReference>
<dbReference type="GO" id="GO:0045944">
    <property type="term" value="P:positive regulation of transcription by RNA polymerase II"/>
    <property type="evidence" value="ECO:0000250"/>
    <property type="project" value="UniProtKB"/>
</dbReference>
<dbReference type="GO" id="GO:0050821">
    <property type="term" value="P:protein stabilization"/>
    <property type="evidence" value="ECO:0000250"/>
    <property type="project" value="UniProtKB"/>
</dbReference>
<dbReference type="GO" id="GO:0015031">
    <property type="term" value="P:protein transport"/>
    <property type="evidence" value="ECO:0007669"/>
    <property type="project" value="UniProtKB-KW"/>
</dbReference>
<dbReference type="GO" id="GO:0034976">
    <property type="term" value="P:response to endoplasmic reticulum stress"/>
    <property type="evidence" value="ECO:0000250"/>
    <property type="project" value="UniProtKB"/>
</dbReference>
<dbReference type="CDD" id="cd12924">
    <property type="entry name" value="iSH2_PIK3R1"/>
    <property type="match status" value="1"/>
</dbReference>
<dbReference type="CDD" id="cd04388">
    <property type="entry name" value="RhoGAP_p85"/>
    <property type="match status" value="1"/>
</dbReference>
<dbReference type="CDD" id="cd09930">
    <property type="entry name" value="SH2_cSH2_p85_like"/>
    <property type="match status" value="1"/>
</dbReference>
<dbReference type="CDD" id="cd09942">
    <property type="entry name" value="SH2_nSH2_p85_like"/>
    <property type="match status" value="1"/>
</dbReference>
<dbReference type="CDD" id="cd11910">
    <property type="entry name" value="SH3_PI3K_p85alpha"/>
    <property type="match status" value="1"/>
</dbReference>
<dbReference type="FunFam" id="1.10.555.10:FF:000035">
    <property type="entry name" value="Phosphatidylinositol 3-kinase regulatory subunit alpha"/>
    <property type="match status" value="1"/>
</dbReference>
<dbReference type="FunFam" id="3.30.505.10:FF:000006">
    <property type="entry name" value="Phosphatidylinositol 3-kinase regulatory subunit alpha"/>
    <property type="match status" value="1"/>
</dbReference>
<dbReference type="FunFam" id="3.30.505.10:FF:000014">
    <property type="entry name" value="Phosphatidylinositol 3-kinase regulatory subunit alpha"/>
    <property type="match status" value="1"/>
</dbReference>
<dbReference type="FunFam" id="2.30.30.40:FF:000075">
    <property type="entry name" value="phosphatidylinositol 3-kinase regulatory subunit alpha"/>
    <property type="match status" value="1"/>
</dbReference>
<dbReference type="FunFam" id="1.10.287.1490:FF:000001">
    <property type="entry name" value="Putative phosphatidylinositol 3-kinase regulatory subunit alpha"/>
    <property type="match status" value="1"/>
</dbReference>
<dbReference type="Gene3D" id="1.10.287.1490">
    <property type="match status" value="1"/>
</dbReference>
<dbReference type="Gene3D" id="1.10.555.10">
    <property type="entry name" value="Rho GTPase activation protein"/>
    <property type="match status" value="1"/>
</dbReference>
<dbReference type="Gene3D" id="3.30.505.10">
    <property type="entry name" value="SH2 domain"/>
    <property type="match status" value="2"/>
</dbReference>
<dbReference type="Gene3D" id="2.30.30.40">
    <property type="entry name" value="SH3 Domains"/>
    <property type="match status" value="1"/>
</dbReference>
<dbReference type="InterPro" id="IPR044124">
    <property type="entry name" value="ISH2_PIK3R1"/>
</dbReference>
<dbReference type="InterPro" id="IPR032498">
    <property type="entry name" value="PI3K_P85_iSH2"/>
</dbReference>
<dbReference type="InterPro" id="IPR035591">
    <property type="entry name" value="PI3K_p85alpha_SH3"/>
</dbReference>
<dbReference type="InterPro" id="IPR035020">
    <property type="entry name" value="PI3kinase_P85_cSH2"/>
</dbReference>
<dbReference type="InterPro" id="IPR035022">
    <property type="entry name" value="PI3kinase_P85_nSH2"/>
</dbReference>
<dbReference type="InterPro" id="IPR008936">
    <property type="entry name" value="Rho_GTPase_activation_prot"/>
</dbReference>
<dbReference type="InterPro" id="IPR000198">
    <property type="entry name" value="RhoGAP_dom"/>
</dbReference>
<dbReference type="InterPro" id="IPR000980">
    <property type="entry name" value="SH2"/>
</dbReference>
<dbReference type="InterPro" id="IPR036860">
    <property type="entry name" value="SH2_dom_sf"/>
</dbReference>
<dbReference type="InterPro" id="IPR036028">
    <property type="entry name" value="SH3-like_dom_sf"/>
</dbReference>
<dbReference type="InterPro" id="IPR001452">
    <property type="entry name" value="SH3_domain"/>
</dbReference>
<dbReference type="PANTHER" id="PTHR10155">
    <property type="entry name" value="PHOSPHATIDYLINOSITOL 3-KINASE REGULATORY SUBUNIT"/>
    <property type="match status" value="1"/>
</dbReference>
<dbReference type="PANTHER" id="PTHR10155:SF1">
    <property type="entry name" value="PHOSPHATIDYLINOSITOL 3-KINASE REGULATORY SUBUNIT BETA"/>
    <property type="match status" value="1"/>
</dbReference>
<dbReference type="Pfam" id="PF16454">
    <property type="entry name" value="PI3K_P85_iSH2"/>
    <property type="match status" value="1"/>
</dbReference>
<dbReference type="Pfam" id="PF00620">
    <property type="entry name" value="RhoGAP"/>
    <property type="match status" value="1"/>
</dbReference>
<dbReference type="Pfam" id="PF00017">
    <property type="entry name" value="SH2"/>
    <property type="match status" value="2"/>
</dbReference>
<dbReference type="PRINTS" id="PR00678">
    <property type="entry name" value="PI3KINASEP85"/>
</dbReference>
<dbReference type="PRINTS" id="PR00401">
    <property type="entry name" value="SH2DOMAIN"/>
</dbReference>
<dbReference type="SMART" id="SM00324">
    <property type="entry name" value="RhoGAP"/>
    <property type="match status" value="1"/>
</dbReference>
<dbReference type="SMART" id="SM00252">
    <property type="entry name" value="SH2"/>
    <property type="match status" value="2"/>
</dbReference>
<dbReference type="SMART" id="SM00326">
    <property type="entry name" value="SH3"/>
    <property type="match status" value="1"/>
</dbReference>
<dbReference type="SUPFAM" id="SSF48350">
    <property type="entry name" value="GTPase activation domain, GAP"/>
    <property type="match status" value="1"/>
</dbReference>
<dbReference type="SUPFAM" id="SSF55550">
    <property type="entry name" value="SH2 domain"/>
    <property type="match status" value="2"/>
</dbReference>
<dbReference type="SUPFAM" id="SSF50044">
    <property type="entry name" value="SH3-domain"/>
    <property type="match status" value="1"/>
</dbReference>
<dbReference type="PROSITE" id="PS50238">
    <property type="entry name" value="RHOGAP"/>
    <property type="match status" value="1"/>
</dbReference>
<dbReference type="PROSITE" id="PS50001">
    <property type="entry name" value="SH2"/>
    <property type="match status" value="2"/>
</dbReference>
<dbReference type="PROSITE" id="PS50002">
    <property type="entry name" value="SH3"/>
    <property type="match status" value="1"/>
</dbReference>
<comment type="function">
    <text evidence="3 4">Binds to activated (phosphorylated) protein-Tyr kinases, through its SH2 domain, and acts as an adapter, mediating the association of the p110 catalytic unit to the plasma membrane. Necessary for the insulin-stimulated increase in glucose uptake and glycogen synthesis in insulin-sensitive tissues. Plays an important role in signaling in response to FGFR1, FGFR2, FGFR3, FGFR4, KITLG/SCF, KIT, PDGFRA and PDGFRB. Likewise, plays a role in ITGB2 signaling. Modulates the cellular response to ER stress by promoting nuclear translocation of XBP1 in a ER stress- and/or insulin-dependent manner during metabolic overloading in the liver and hence plays a role in glucose tolerance improvement (By similarity).</text>
</comment>
<comment type="subunit">
    <text evidence="2 3 4 5">Heterodimer of a regulatory subunit PIK3R1 and a p110 catalytic subunit (PIK3CA, PIK3CB or PIK3CD). Interacts (via SH2 domains) with CCDC88A/GIV (tyrosine-phosphorylated form); the interaction enables recruitment of PIK3R1 to the EGFR receptor, enhancing PI3K activity and cell migration (By similarity). Interacts with phosphorylated LAT, LAX1, TRAT1 and LIME1 upon TCR and/or BCR activation. Interacts with CBLB. The SH2 domains interact with the YTHM motif of phosphorylated INSR in vitro. Also interacts with tyrosine-phosphorylated IGF1R in vitro. Interacts with CD28 and CD3Z upon T-cell activation. Interacts with SOCS7. Interacts with IRS1, IRS2 and phosphorylated IRS4, as well as with NISCH and HCST. Interacts with AXL, FASLG, FER, FGR, HCK, KIT and BCR. Interacts with PDGFRA (tyrosine phosphorylated) and PDGFRB (tyrosine phosphorylated). Interacts (via SH2 domain) with CSF1R (tyrosine phosphorylated). Interacts with ERBB4 (phosphorylated). Interacts (via SH2 domain) with TEK/TIE2 (tyrosine phosphorylated). Interacts with LYN (via SH3 domain); this enhances enzyme activity. Interacts with NTRK1 (phosphorylated upon ligand-binding). Interacts with PTK2/FAK1. Interacts with PIK3R2; the interaction is dissociated in an insulin-dependent manner. Interacts with XBP1; the interaction is direct and induces translocation of XBP1 into the nucleus in a ER stress- and/or insulin-dependent but PI3K-independent manner (By similarity). Interacts with FAM83B; activates the PI3K/AKT signaling cascade (By similarity). Interacts with APPL1 and APPL2 (By similarity). Interacts with SRC (By similarity). Interacts with ALOX5; this interaction bridges ALOX5 with CD40 after CD40 ligation in B cells and leads to the production of reactive oxygen species (ROS) (By similarity). Interacts with nephrin NPHN1; the interaction is reduced by high glucose levels (By similarity). Interacts with CD28 (By similarity). Interacts with ICOS (By similarity).</text>
</comment>
<comment type="alternative products">
    <event type="alternative splicing"/>
    <isoform>
        <id>Q5R685-1</id>
        <name>1</name>
        <sequence type="displayed"/>
    </isoform>
    <isoform>
        <id>Q5R685-2</id>
        <name>2</name>
        <sequence type="described" ref="VSP_037230 VSP_037231"/>
    </isoform>
</comment>
<comment type="domain">
    <text evidence="1">The SH3 domain mediates the binding to CBLB.</text>
</comment>
<comment type="PTM">
    <text evidence="1">Polyubiquitinated in T-cells by CBLB; which does not promote proteasomal degradation but impairs association with CD28 and CD3Z upon T-cell activation.</text>
</comment>
<comment type="PTM">
    <text evidence="1">Phosphorylated. Tyrosine phosphorylated in response to signaling by FGFR1, FGFR2, FGFR3 and FGFR4. Phosphorylated by CSF1R. Phosphorylated on tyrosine residues by TEK/TIE2. Dephosphorylated by PTPRJ. Phosphorylated by PIK3CA at Ser-608; phosphorylation is stimulated by insulin and PDGF. The relevance of phosphorylation by PIK3CA is however unclear. Phosphorylated in response to KIT and KITLG/SCF. Phosphorylated by FGR and ERBB4 (By similarity).</text>
</comment>
<comment type="PTM">
    <text evidence="3">In adipose tissue, polyubiquitinated by the BCR(KBTBD2) E3 ubiquitin ligase complex; recognized by KBTBD2 through the SH2 domains, undergoes 'Lys-48'-linked polyubiquitination leading to its degradation.</text>
</comment>
<comment type="similarity">
    <text evidence="11">Belongs to the PI3K p85 subunit family.</text>
</comment>
<feature type="initiator methionine" description="Removed" evidence="4">
    <location>
        <position position="1"/>
    </location>
</feature>
<feature type="chain" id="PRO_0000373801" description="Phosphatidylinositol 3-kinase regulatory subunit alpha">
    <location>
        <begin position="2"/>
        <end position="724"/>
    </location>
</feature>
<feature type="domain" description="SH3" evidence="8">
    <location>
        <begin position="3"/>
        <end position="79"/>
    </location>
</feature>
<feature type="domain" description="Rho-GAP" evidence="6">
    <location>
        <begin position="113"/>
        <end position="301"/>
    </location>
</feature>
<feature type="domain" description="SH2 1" evidence="7">
    <location>
        <begin position="333"/>
        <end position="428"/>
    </location>
</feature>
<feature type="domain" description="SH2 2" evidence="7">
    <location>
        <begin position="624"/>
        <end position="718"/>
    </location>
</feature>
<feature type="region of interest" description="Disordered" evidence="9">
    <location>
        <begin position="80"/>
        <end position="109"/>
    </location>
</feature>
<feature type="compositionally biased region" description="Pro residues" evidence="9">
    <location>
        <begin position="84"/>
        <end position="97"/>
    </location>
</feature>
<feature type="site" description="Arginine finger; crucial for GTP hydrolysis by stabilizing the transition state" evidence="6">
    <location>
        <position position="151"/>
    </location>
</feature>
<feature type="modified residue" description="N-acetylserine" evidence="4">
    <location>
        <position position="2"/>
    </location>
</feature>
<feature type="modified residue" description="Phosphoserine" evidence="4">
    <location>
        <position position="154"/>
    </location>
</feature>
<feature type="modified residue" description="Phosphoserine" evidence="4">
    <location>
        <position position="279"/>
    </location>
</feature>
<feature type="modified residue" description="Phosphotyrosine" evidence="3">
    <location>
        <position position="467"/>
    </location>
</feature>
<feature type="modified residue" description="Phosphotyrosine" evidence="4">
    <location>
        <position position="580"/>
    </location>
</feature>
<feature type="modified residue" description="Phosphoserine" evidence="2">
    <location>
        <position position="608"/>
    </location>
</feature>
<feature type="splice variant" id="VSP_037230" description="In isoform 2." evidence="10">
    <location>
        <begin position="1"/>
        <end position="270"/>
    </location>
</feature>
<feature type="splice variant" id="VSP_037231" description="In isoform 2." evidence="10">
    <original>MLFRFSAASSDNTENLIKVIEILISTEWNERQPA</original>
    <variation>MYNTVWNMEDLDLEYAKTDINCGTDLMFYIEMDP</variation>
    <location>
        <begin position="271"/>
        <end position="304"/>
    </location>
</feature>
<feature type="sequence conflict" description="In Ref. 1; CAH90062." evidence="11" ref="1">
    <original>K</original>
    <variation>R</variation>
    <location>
        <position position="550"/>
    </location>
</feature>
<name>P85A_PONAB</name>
<protein>
    <recommendedName>
        <fullName>Phosphatidylinositol 3-kinase regulatory subunit alpha</fullName>
        <shortName>PI3-kinase regulatory subunit alpha</shortName>
        <shortName>PI3K regulatory subunit alpha</shortName>
        <shortName>PtdIns-3-kinase regulatory subunit alpha</shortName>
    </recommendedName>
    <alternativeName>
        <fullName>Phosphatidylinositol 3-kinase 85 kDa regulatory subunit alpha</fullName>
        <shortName>PI3-kinase subunit p85-alpha</shortName>
        <shortName>PtdIns-3-kinase regulatory subunit p85-alpha</shortName>
    </alternativeName>
</protein>
<gene>
    <name type="primary">PIK3R1</name>
</gene>
<reference key="1">
    <citation type="submission" date="2004-11" db="EMBL/GenBank/DDBJ databases">
        <authorList>
            <consortium name="The German cDNA consortium"/>
        </authorList>
    </citation>
    <scope>NUCLEOTIDE SEQUENCE [LARGE SCALE MRNA] (ISOFORMS 1 AND 2)</scope>
    <source>
        <tissue>Brain cortex</tissue>
    </source>
</reference>
<accession>Q5R685</accession>
<accession>Q5RDU5</accession>